<organism>
    <name type="scientific">Drosophila melanogaster</name>
    <name type="common">Fruit fly</name>
    <dbReference type="NCBI Taxonomy" id="7227"/>
    <lineage>
        <taxon>Eukaryota</taxon>
        <taxon>Metazoa</taxon>
        <taxon>Ecdysozoa</taxon>
        <taxon>Arthropoda</taxon>
        <taxon>Hexapoda</taxon>
        <taxon>Insecta</taxon>
        <taxon>Pterygota</taxon>
        <taxon>Neoptera</taxon>
        <taxon>Endopterygota</taxon>
        <taxon>Diptera</taxon>
        <taxon>Brachycera</taxon>
        <taxon>Muscomorpha</taxon>
        <taxon>Ephydroidea</taxon>
        <taxon>Drosophilidae</taxon>
        <taxon>Drosophila</taxon>
        <taxon>Sophophora</taxon>
    </lineage>
</organism>
<protein>
    <recommendedName>
        <fullName>Retrovirus-related Pol polyprotein from transposon gypsy</fullName>
    </recommendedName>
    <domain>
        <recommendedName>
            <fullName>Reverse transcriptase</fullName>
            <ecNumber>2.7.7.49</ecNumber>
        </recommendedName>
    </domain>
    <domain>
        <recommendedName>
            <fullName>Endonuclease</fullName>
        </recommendedName>
    </domain>
</protein>
<reference key="1">
    <citation type="journal article" date="1986" name="Mol. Cell. Biol.">
        <title>The Drosophila melanogaster gypsy transposable element encodes putative gene products homologous to retroviral proteins.</title>
        <authorList>
            <person name="Marlor R.L."/>
            <person name="Parkhurst S.M."/>
            <person name="Corces V.G."/>
        </authorList>
    </citation>
    <scope>NUCLEOTIDE SEQUENCE [GENOMIC DNA]</scope>
</reference>
<reference key="2">
    <citation type="journal article" date="1992" name="Mol. Gen. Genet.">
        <title>The suppressor of Hairy-wing binding region is required for gypsy mutagenesis.</title>
        <authorList>
            <person name="Smith P.A."/>
            <person name="Corces V.G."/>
        </authorList>
    </citation>
    <scope>NUCLEOTIDE SEQUENCE [GENOMIC DNA]</scope>
</reference>
<reference key="3">
    <citation type="journal article" date="1986" name="Nucleic Acids Res.">
        <title>Identification of genes for reverse transcriptase-like enzymes in two Drosophila retrotransposons, 412 and gypsy; a rapid detection method of reverse transcriptase genes using YXDD box probes.</title>
        <authorList>
            <person name="Yuki S."/>
            <person name="Ishimaru S."/>
            <person name="Inouye S."/>
            <person name="Saigo K."/>
        </authorList>
    </citation>
    <scope>NUCLEOTIDE SEQUENCE [GENOMIC DNA] OF 21-950</scope>
</reference>
<comment type="catalytic activity">
    <reaction evidence="1">
        <text>DNA(n) + a 2'-deoxyribonucleoside 5'-triphosphate = DNA(n+1) + diphosphate</text>
        <dbReference type="Rhea" id="RHEA:22508"/>
        <dbReference type="Rhea" id="RHEA-COMP:17339"/>
        <dbReference type="Rhea" id="RHEA-COMP:17340"/>
        <dbReference type="ChEBI" id="CHEBI:33019"/>
        <dbReference type="ChEBI" id="CHEBI:61560"/>
        <dbReference type="ChEBI" id="CHEBI:173112"/>
        <dbReference type="EC" id="2.7.7.49"/>
    </reaction>
</comment>
<comment type="sequence caution" evidence="3">
    <conflict type="erroneous initiation">
        <sequence resource="EMBL-CDS" id="AAA70219"/>
    </conflict>
</comment>
<proteinExistence type="predicted"/>
<name>POLY_DROME</name>
<accession>P10401</accession>
<accession>P10402</accession>
<feature type="chain" id="PRO_0000058512" description="Retrovirus-related Pol polyprotein from transposon gypsy">
    <location>
        <begin position="1"/>
        <end position="1035"/>
    </location>
</feature>
<feature type="domain" description="Reverse transcriptase" evidence="1">
    <location>
        <begin position="205"/>
        <end position="390"/>
    </location>
</feature>
<feature type="domain" description="Integrase catalytic" evidence="2">
    <location>
        <begin position="797"/>
        <end position="956"/>
    </location>
</feature>
<feature type="sequence conflict" description="In Ref. 3; CAA27371." evidence="3" ref="3">
    <original>DA</original>
    <variation>AR</variation>
    <location>
        <begin position="31"/>
        <end position="32"/>
    </location>
</feature>
<feature type="sequence conflict" description="In Ref. 3; CAA27371." evidence="3" ref="3">
    <original>G</original>
    <variation>R</variation>
    <location>
        <position position="60"/>
    </location>
</feature>
<feature type="sequence conflict" description="In Ref. 3; CAA27371." evidence="3" ref="3">
    <original>F</original>
    <variation>S</variation>
    <location>
        <position position="232"/>
    </location>
</feature>
<feature type="sequence conflict" description="In Ref. 3; CAA27371." evidence="3" ref="3">
    <original>D</original>
    <variation>V</variation>
    <location>
        <position position="490"/>
    </location>
</feature>
<feature type="sequence conflict" description="In Ref. 3; CAA27371." evidence="3" ref="3">
    <original>S</original>
    <variation>T</variation>
    <location>
        <position position="883"/>
    </location>
</feature>
<feature type="sequence conflict" description="In Ref. 3; CAA27371." evidence="3" ref="3">
    <original>N</original>
    <variation>S</variation>
    <location>
        <position position="923"/>
    </location>
</feature>
<feature type="sequence conflict" description="In Ref. 3." evidence="3" ref="3">
    <original>RPIE</original>
    <variation>NQLR</variation>
    <location>
        <begin position="947"/>
        <end position="950"/>
    </location>
</feature>
<gene>
    <name type="primary">pol</name>
</gene>
<sequence>RLVEFFRGRSRLPFIERRLAGRTLKMLIDTDAAKNYIRPVKELKNVMPVASPFSVSSIHGSTEIKHKCLMKVFKHISPFFLLDSLNAFDAIIGLDLLTQAGVKLNLAEDSLEYQGIAEKLHYFSCPSVNFTDVNDIVVPDSVKKEFKDTIIRRKKAFSTTNEALPFNTAVTATIRTVDNEPVYSRAYPTLMGVSDFVNNEVKQLLKDGIIRPSRSPYNSPTWVVDKKGTDAFGNPNKRLVIDFRKLNEKTIPDRYPMPSIPMILANLGKAKFFTTLDLKSGYHQIYLAEHDREKTSFSVNGGKYEFCRLPFGLRNASSIFQRALDDVLREQIGKICYVYVDDVIIFSENESDHVRHIDTVLKCLIDANMRVSQEKTRFFKESVEYLGFIVSKDGTKSDPEKVKAIQEYPEPDCVYKVRSFLGLASYYRVFIKDFAAIARPITDILKGENGSVSKHMSKKIPVEFNETQRNAFQRLRNILASEDVILKYPDFKKPFDLTTDASASGIGAVLSQEGRPITMISRTLKQPEQNYATNERELLAIVWALGKLQNFLYGSREINIFTDHQPLTFAVADRNTNAKIKRWKSYIDQHNAKVFYKPGKENFVADALSRQNLNALQNEPQSDAATIHSELSLTYTVETTDKPLNCFRNQIILEAARFPLKRNLVLFRSKSRHLISFTDKSWLLKTLKEVVNPDVVNAIHCDLPTLASFQHDLIAHFPATQFRHCKNVVLDITDKNEQIEIVTAEHNRAHRAAQENIKQVLRDYYFPKMGSLAKEVVANCRVCTQAKYDRHPKKQELGETPIPSYTGEMVHIDIFSTDRKLFLTCIDKFSKYAIVQPVVSRTIVDITAPLLQIINLFPNIKTVYCDNEPAFNSETVTSMLKNSFGIDIVNAPPLHSSSNGQVERFHSTLAEIARCLKLDKKTNDTVELILRATIEYNKTVHSVTRERPIEVVHPGAHERCLEIKARLVKAQQDSIGRNNPSRQNRVFEVGERVFVKNNKRLGNKLTPLCTEQKVQADLGTSVLIKGRVVHKDNLK</sequence>
<keyword id="KW-0255">Endonuclease</keyword>
<keyword id="KW-0378">Hydrolase</keyword>
<keyword id="KW-0540">Nuclease</keyword>
<keyword id="KW-0548">Nucleotidyltransferase</keyword>
<keyword id="KW-0695">RNA-directed DNA polymerase</keyword>
<keyword id="KW-0808">Transferase</keyword>
<keyword id="KW-0814">Transposable element</keyword>
<evidence type="ECO:0000255" key="1">
    <source>
        <dbReference type="PROSITE-ProRule" id="PRU00405"/>
    </source>
</evidence>
<evidence type="ECO:0000255" key="2">
    <source>
        <dbReference type="PROSITE-ProRule" id="PRU00457"/>
    </source>
</evidence>
<evidence type="ECO:0000305" key="3"/>
<dbReference type="EC" id="2.7.7.49"/>
<dbReference type="EMBL" id="M12927">
    <property type="protein sequence ID" value="AAA70219.1"/>
    <property type="status" value="ALT_INIT"/>
    <property type="molecule type" value="Genomic_DNA"/>
</dbReference>
<dbReference type="EMBL" id="X03734">
    <property type="protein sequence ID" value="CAA27371.1"/>
    <property type="molecule type" value="Genomic_DNA"/>
</dbReference>
<dbReference type="PIR" id="B25666">
    <property type="entry name" value="GNFFG1"/>
</dbReference>
<dbReference type="SMR" id="P10401"/>
<dbReference type="MEROPS" id="A02.021"/>
<dbReference type="FlyBase" id="FBgn0014966">
    <property type="gene designation" value="gypsy\pol"/>
</dbReference>
<dbReference type="PRO" id="PR:P10401"/>
<dbReference type="GO" id="GO:0042575">
    <property type="term" value="C:DNA polymerase complex"/>
    <property type="evidence" value="ECO:0007669"/>
    <property type="project" value="UniProtKB-ARBA"/>
</dbReference>
<dbReference type="GO" id="GO:0004519">
    <property type="term" value="F:endonuclease activity"/>
    <property type="evidence" value="ECO:0007669"/>
    <property type="project" value="UniProtKB-KW"/>
</dbReference>
<dbReference type="GO" id="GO:0003676">
    <property type="term" value="F:nucleic acid binding"/>
    <property type="evidence" value="ECO:0007669"/>
    <property type="project" value="InterPro"/>
</dbReference>
<dbReference type="GO" id="GO:0003964">
    <property type="term" value="F:RNA-directed DNA polymerase activity"/>
    <property type="evidence" value="ECO:0007669"/>
    <property type="project" value="UniProtKB-KW"/>
</dbReference>
<dbReference type="GO" id="GO:0015074">
    <property type="term" value="P:DNA integration"/>
    <property type="evidence" value="ECO:0007669"/>
    <property type="project" value="InterPro"/>
</dbReference>
<dbReference type="CDD" id="cd09274">
    <property type="entry name" value="RNase_HI_RT_Ty3"/>
    <property type="match status" value="1"/>
</dbReference>
<dbReference type="CDD" id="cd01647">
    <property type="entry name" value="RT_LTR"/>
    <property type="match status" value="1"/>
</dbReference>
<dbReference type="FunFam" id="3.10.20.370:FF:000001">
    <property type="entry name" value="Retrovirus-related Pol polyprotein from transposon 17.6-like protein"/>
    <property type="match status" value="1"/>
</dbReference>
<dbReference type="FunFam" id="3.30.70.270:FF:000020">
    <property type="entry name" value="Transposon Tf2-6 polyprotein-like Protein"/>
    <property type="match status" value="1"/>
</dbReference>
<dbReference type="Gene3D" id="1.10.340.70">
    <property type="match status" value="1"/>
</dbReference>
<dbReference type="Gene3D" id="3.30.70.270">
    <property type="match status" value="2"/>
</dbReference>
<dbReference type="Gene3D" id="2.40.70.10">
    <property type="entry name" value="Acid Proteases"/>
    <property type="match status" value="1"/>
</dbReference>
<dbReference type="Gene3D" id="3.10.10.10">
    <property type="entry name" value="HIV Type 1 Reverse Transcriptase, subunit A, domain 1"/>
    <property type="match status" value="1"/>
</dbReference>
<dbReference type="Gene3D" id="3.30.420.10">
    <property type="entry name" value="Ribonuclease H-like superfamily/Ribonuclease H"/>
    <property type="match status" value="2"/>
</dbReference>
<dbReference type="InterPro" id="IPR043502">
    <property type="entry name" value="DNA/RNA_pol_sf"/>
</dbReference>
<dbReference type="InterPro" id="IPR001584">
    <property type="entry name" value="Integrase_cat-core"/>
</dbReference>
<dbReference type="InterPro" id="IPR041588">
    <property type="entry name" value="Integrase_H2C2"/>
</dbReference>
<dbReference type="InterPro" id="IPR021109">
    <property type="entry name" value="Peptidase_aspartic_dom_sf"/>
</dbReference>
<dbReference type="InterPro" id="IPR050951">
    <property type="entry name" value="Retrovirus_Pol_polyprotein"/>
</dbReference>
<dbReference type="InterPro" id="IPR043128">
    <property type="entry name" value="Rev_trsase/Diguanyl_cyclase"/>
</dbReference>
<dbReference type="InterPro" id="IPR012337">
    <property type="entry name" value="RNaseH-like_sf"/>
</dbReference>
<dbReference type="InterPro" id="IPR036397">
    <property type="entry name" value="RNaseH_sf"/>
</dbReference>
<dbReference type="InterPro" id="IPR000477">
    <property type="entry name" value="RT_dom"/>
</dbReference>
<dbReference type="InterPro" id="IPR041373">
    <property type="entry name" value="RT_RNaseH"/>
</dbReference>
<dbReference type="PANTHER" id="PTHR37984">
    <property type="entry name" value="PROTEIN CBG26694"/>
    <property type="match status" value="1"/>
</dbReference>
<dbReference type="PANTHER" id="PTHR37984:SF5">
    <property type="entry name" value="PROTEIN NYNRIN-LIKE"/>
    <property type="match status" value="1"/>
</dbReference>
<dbReference type="Pfam" id="PF17921">
    <property type="entry name" value="Integrase_H2C2"/>
    <property type="match status" value="1"/>
</dbReference>
<dbReference type="Pfam" id="PF17917">
    <property type="entry name" value="RT_RNaseH"/>
    <property type="match status" value="1"/>
</dbReference>
<dbReference type="Pfam" id="PF00078">
    <property type="entry name" value="RVT_1"/>
    <property type="match status" value="1"/>
</dbReference>
<dbReference type="SUPFAM" id="SSF50630">
    <property type="entry name" value="Acid proteases"/>
    <property type="match status" value="1"/>
</dbReference>
<dbReference type="SUPFAM" id="SSF56672">
    <property type="entry name" value="DNA/RNA polymerases"/>
    <property type="match status" value="1"/>
</dbReference>
<dbReference type="SUPFAM" id="SSF53098">
    <property type="entry name" value="Ribonuclease H-like"/>
    <property type="match status" value="1"/>
</dbReference>
<dbReference type="PROSITE" id="PS50994">
    <property type="entry name" value="INTEGRASE"/>
    <property type="match status" value="1"/>
</dbReference>
<dbReference type="PROSITE" id="PS50878">
    <property type="entry name" value="RT_POL"/>
    <property type="match status" value="1"/>
</dbReference>